<proteinExistence type="inferred from homology"/>
<evidence type="ECO:0000255" key="1">
    <source>
        <dbReference type="HAMAP-Rule" id="MF_01366"/>
    </source>
</evidence>
<evidence type="ECO:0000256" key="2">
    <source>
        <dbReference type="SAM" id="MobiDB-lite"/>
    </source>
</evidence>
<evidence type="ECO:0000305" key="3"/>
<feature type="chain" id="PRO_1000166874" description="Large ribosomal subunit protein uL13">
    <location>
        <begin position="1"/>
        <end position="153"/>
    </location>
</feature>
<feature type="region of interest" description="Disordered" evidence="2">
    <location>
        <begin position="134"/>
        <end position="153"/>
    </location>
</feature>
<keyword id="KW-0687">Ribonucleoprotein</keyword>
<keyword id="KW-0689">Ribosomal protein</keyword>
<gene>
    <name evidence="1" type="primary">rplM</name>
    <name type="ordered locus">Mchl_2842</name>
</gene>
<reference key="1">
    <citation type="submission" date="2008-12" db="EMBL/GenBank/DDBJ databases">
        <title>Complete sequence of chromosome of Methylobacterium chloromethanicum CM4.</title>
        <authorList>
            <consortium name="US DOE Joint Genome Institute"/>
            <person name="Lucas S."/>
            <person name="Copeland A."/>
            <person name="Lapidus A."/>
            <person name="Glavina del Rio T."/>
            <person name="Dalin E."/>
            <person name="Tice H."/>
            <person name="Bruce D."/>
            <person name="Goodwin L."/>
            <person name="Pitluck S."/>
            <person name="Chertkov O."/>
            <person name="Brettin T."/>
            <person name="Detter J.C."/>
            <person name="Han C."/>
            <person name="Larimer F."/>
            <person name="Land M."/>
            <person name="Hauser L."/>
            <person name="Kyrpides N."/>
            <person name="Mikhailova N."/>
            <person name="Marx C."/>
            <person name="Richardson P."/>
        </authorList>
    </citation>
    <scope>NUCLEOTIDE SEQUENCE [LARGE SCALE GENOMIC DNA]</scope>
    <source>
        <strain>CM4 / NCIMB 13688</strain>
    </source>
</reference>
<protein>
    <recommendedName>
        <fullName evidence="1">Large ribosomal subunit protein uL13</fullName>
    </recommendedName>
    <alternativeName>
        <fullName evidence="3">50S ribosomal protein L13</fullName>
    </alternativeName>
</protein>
<accession>B7KPU5</accession>
<comment type="function">
    <text evidence="1">This protein is one of the early assembly proteins of the 50S ribosomal subunit, although it is not seen to bind rRNA by itself. It is important during the early stages of 50S assembly.</text>
</comment>
<comment type="subunit">
    <text evidence="1">Part of the 50S ribosomal subunit.</text>
</comment>
<comment type="similarity">
    <text evidence="1">Belongs to the universal ribosomal protein uL13 family.</text>
</comment>
<dbReference type="EMBL" id="CP001298">
    <property type="protein sequence ID" value="ACK83681.1"/>
    <property type="molecule type" value="Genomic_DNA"/>
</dbReference>
<dbReference type="RefSeq" id="WP_004446860.1">
    <property type="nucleotide sequence ID" value="NC_011757.1"/>
</dbReference>
<dbReference type="SMR" id="B7KPU5"/>
<dbReference type="GeneID" id="72990248"/>
<dbReference type="KEGG" id="mch:Mchl_2842"/>
<dbReference type="HOGENOM" id="CLU_082184_2_2_5"/>
<dbReference type="Proteomes" id="UP000002385">
    <property type="component" value="Chromosome"/>
</dbReference>
<dbReference type="GO" id="GO:0022625">
    <property type="term" value="C:cytosolic large ribosomal subunit"/>
    <property type="evidence" value="ECO:0007669"/>
    <property type="project" value="TreeGrafter"/>
</dbReference>
<dbReference type="GO" id="GO:0003729">
    <property type="term" value="F:mRNA binding"/>
    <property type="evidence" value="ECO:0007669"/>
    <property type="project" value="TreeGrafter"/>
</dbReference>
<dbReference type="GO" id="GO:0003735">
    <property type="term" value="F:structural constituent of ribosome"/>
    <property type="evidence" value="ECO:0007669"/>
    <property type="project" value="InterPro"/>
</dbReference>
<dbReference type="GO" id="GO:0017148">
    <property type="term" value="P:negative regulation of translation"/>
    <property type="evidence" value="ECO:0007669"/>
    <property type="project" value="TreeGrafter"/>
</dbReference>
<dbReference type="GO" id="GO:0006412">
    <property type="term" value="P:translation"/>
    <property type="evidence" value="ECO:0007669"/>
    <property type="project" value="UniProtKB-UniRule"/>
</dbReference>
<dbReference type="CDD" id="cd00392">
    <property type="entry name" value="Ribosomal_L13"/>
    <property type="match status" value="1"/>
</dbReference>
<dbReference type="FunFam" id="3.90.1180.10:FF:000001">
    <property type="entry name" value="50S ribosomal protein L13"/>
    <property type="match status" value="1"/>
</dbReference>
<dbReference type="Gene3D" id="3.90.1180.10">
    <property type="entry name" value="Ribosomal protein L13"/>
    <property type="match status" value="1"/>
</dbReference>
<dbReference type="HAMAP" id="MF_01366">
    <property type="entry name" value="Ribosomal_uL13"/>
    <property type="match status" value="1"/>
</dbReference>
<dbReference type="InterPro" id="IPR005822">
    <property type="entry name" value="Ribosomal_uL13"/>
</dbReference>
<dbReference type="InterPro" id="IPR005823">
    <property type="entry name" value="Ribosomal_uL13_bac-type"/>
</dbReference>
<dbReference type="InterPro" id="IPR036899">
    <property type="entry name" value="Ribosomal_uL13_sf"/>
</dbReference>
<dbReference type="NCBIfam" id="TIGR01066">
    <property type="entry name" value="rplM_bact"/>
    <property type="match status" value="1"/>
</dbReference>
<dbReference type="PANTHER" id="PTHR11545:SF2">
    <property type="entry name" value="LARGE RIBOSOMAL SUBUNIT PROTEIN UL13M"/>
    <property type="match status" value="1"/>
</dbReference>
<dbReference type="PANTHER" id="PTHR11545">
    <property type="entry name" value="RIBOSOMAL PROTEIN L13"/>
    <property type="match status" value="1"/>
</dbReference>
<dbReference type="Pfam" id="PF00572">
    <property type="entry name" value="Ribosomal_L13"/>
    <property type="match status" value="1"/>
</dbReference>
<dbReference type="PIRSF" id="PIRSF002181">
    <property type="entry name" value="Ribosomal_L13"/>
    <property type="match status" value="1"/>
</dbReference>
<dbReference type="SUPFAM" id="SSF52161">
    <property type="entry name" value="Ribosomal protein L13"/>
    <property type="match status" value="1"/>
</dbReference>
<name>RL13_METC4</name>
<sequence length="153" mass="17173">MKTTSLKPADVDKKWVVIDAEGLVVGRLASIVAMRLRGKHKPAYTPHVDCGDHVIVINADKVKFTGRKYDQKVYYHHTGYPGGIKERSAKFILEGRFPERVVEKAVERMLPRGPLFRQILGHLRVYKGAAHPHEAQQPQALDVGSLNRKNVSA</sequence>
<organism>
    <name type="scientific">Methylorubrum extorquens (strain CM4 / NCIMB 13688)</name>
    <name type="common">Methylobacterium extorquens</name>
    <dbReference type="NCBI Taxonomy" id="440085"/>
    <lineage>
        <taxon>Bacteria</taxon>
        <taxon>Pseudomonadati</taxon>
        <taxon>Pseudomonadota</taxon>
        <taxon>Alphaproteobacteria</taxon>
        <taxon>Hyphomicrobiales</taxon>
        <taxon>Methylobacteriaceae</taxon>
        <taxon>Methylorubrum</taxon>
    </lineage>
</organism>